<evidence type="ECO:0000250" key="1"/>
<evidence type="ECO:0000255" key="2">
    <source>
        <dbReference type="PROSITE-ProRule" id="PRU01234"/>
    </source>
</evidence>
<evidence type="ECO:0000305" key="3"/>
<comment type="function">
    <text evidence="1">May be involved in a process influencing telomere capping.</text>
</comment>
<comment type="subcellular location">
    <subcellularLocation>
        <location evidence="1">Cytoplasm</location>
    </subcellularLocation>
</comment>
<comment type="similarity">
    <text evidence="3">Belongs to the RTC5 family.</text>
</comment>
<accession>C5DJG1</accession>
<sequence length="554" mass="62089">MGQNSSNTVSSSQSSTHFESENDLLSWYDKKALKLVSTPELVSYKGNIDGKPLDAALNRKELMRVLRLQNANEAVEGLLFNCVQTLANFPLIKDCYENVTYMGVLKSCVLLNKNRCLEYVQDKRYNHTKLVYISLALNKAVKEMSSLPNSNDSLDAPKVIATFNNVAEEELVVPAETMLEFLTLMLTMSKATVIKNSRLDVNISEKWDSFKTCALSILRTMNTDILTSQDALKNVISYTQFQNVISSVCPNLLVPLECLMEHVLFLNRDLVDLEASKPLIPQSKLVTEPLLAQLATVWPRELVFSRLQKLYVGRDSGFSMRSFQAKAFKWMAPSILLVQGSRIPDDQDYAKNKNQRYKKFLDEYPRLKDEDQHILPALSGKRKLLFAILINEPWKVTNSELFGDIKTTIVQLSPIQEVYKASKPGNVYFNTLGGGIGIGSPQPIIKSSGVKFVPGNVSLTIDPNLEFAAFRNVGFGGSIAPSNTPTSEHKFLIQDIETWGCGGEKELEEQMKNWEWEEAEAQRRQRINLKSVNDDRALLELAGLVGQNQSGGSV</sequence>
<keyword id="KW-0963">Cytoplasm</keyword>
<keyword id="KW-1185">Reference proteome</keyword>
<reference key="1">
    <citation type="journal article" date="2009" name="Genome Res.">
        <title>Comparative genomics of protoploid Saccharomycetaceae.</title>
        <authorList>
            <consortium name="The Genolevures Consortium"/>
            <person name="Souciet J.-L."/>
            <person name="Dujon B."/>
            <person name="Gaillardin C."/>
            <person name="Johnston M."/>
            <person name="Baret P.V."/>
            <person name="Cliften P."/>
            <person name="Sherman D.J."/>
            <person name="Weissenbach J."/>
            <person name="Westhof E."/>
            <person name="Wincker P."/>
            <person name="Jubin C."/>
            <person name="Poulain J."/>
            <person name="Barbe V."/>
            <person name="Segurens B."/>
            <person name="Artiguenave F."/>
            <person name="Anthouard V."/>
            <person name="Vacherie B."/>
            <person name="Val M.-E."/>
            <person name="Fulton R.S."/>
            <person name="Minx P."/>
            <person name="Wilson R."/>
            <person name="Durrens P."/>
            <person name="Jean G."/>
            <person name="Marck C."/>
            <person name="Martin T."/>
            <person name="Nikolski M."/>
            <person name="Rolland T."/>
            <person name="Seret M.-L."/>
            <person name="Casaregola S."/>
            <person name="Despons L."/>
            <person name="Fairhead C."/>
            <person name="Fischer G."/>
            <person name="Lafontaine I."/>
            <person name="Leh V."/>
            <person name="Lemaire M."/>
            <person name="de Montigny J."/>
            <person name="Neuveglise C."/>
            <person name="Thierry A."/>
            <person name="Blanc-Lenfle I."/>
            <person name="Bleykasten C."/>
            <person name="Diffels J."/>
            <person name="Fritsch E."/>
            <person name="Frangeul L."/>
            <person name="Goeffon A."/>
            <person name="Jauniaux N."/>
            <person name="Kachouri-Lafond R."/>
            <person name="Payen C."/>
            <person name="Potier S."/>
            <person name="Pribylova L."/>
            <person name="Ozanne C."/>
            <person name="Richard G.-F."/>
            <person name="Sacerdot C."/>
            <person name="Straub M.-L."/>
            <person name="Talla E."/>
        </authorList>
    </citation>
    <scope>NUCLEOTIDE SEQUENCE [LARGE SCALE GENOMIC DNA]</scope>
    <source>
        <strain>ATCC 56472 / CBS 6340 / NRRL Y-8284</strain>
    </source>
</reference>
<organism>
    <name type="scientific">Lachancea thermotolerans (strain ATCC 56472 / CBS 6340 / NRRL Y-8284)</name>
    <name type="common">Yeast</name>
    <name type="synonym">Kluyveromyces thermotolerans</name>
    <dbReference type="NCBI Taxonomy" id="559295"/>
    <lineage>
        <taxon>Eukaryota</taxon>
        <taxon>Fungi</taxon>
        <taxon>Dikarya</taxon>
        <taxon>Ascomycota</taxon>
        <taxon>Saccharomycotina</taxon>
        <taxon>Saccharomycetes</taxon>
        <taxon>Saccharomycetales</taxon>
        <taxon>Saccharomycetaceae</taxon>
        <taxon>Lachancea</taxon>
    </lineage>
</organism>
<feature type="chain" id="PRO_0000408827" description="Restriction of telomere capping protein 5">
    <location>
        <begin position="1"/>
        <end position="554"/>
    </location>
</feature>
<feature type="domain" description="TLDc" evidence="2">
    <location>
        <begin position="284"/>
        <end position="502"/>
    </location>
</feature>
<gene>
    <name type="primary">RTC5</name>
    <name type="ordered locus">KLTH0F16126g</name>
</gene>
<protein>
    <recommendedName>
        <fullName>Restriction of telomere capping protein 5</fullName>
    </recommendedName>
</protein>
<proteinExistence type="inferred from homology"/>
<dbReference type="EMBL" id="CU928170">
    <property type="protein sequence ID" value="CAR24450.1"/>
    <property type="molecule type" value="Genomic_DNA"/>
</dbReference>
<dbReference type="RefSeq" id="XP_002554887.1">
    <property type="nucleotide sequence ID" value="XM_002554841.1"/>
</dbReference>
<dbReference type="SMR" id="C5DJG1"/>
<dbReference type="FunCoup" id="C5DJG1">
    <property type="interactions" value="17"/>
</dbReference>
<dbReference type="STRING" id="559295.C5DJG1"/>
<dbReference type="GeneID" id="8293118"/>
<dbReference type="KEGG" id="lth:KLTH0F16126g"/>
<dbReference type="eggNOG" id="ENOG502QV3R">
    <property type="taxonomic scope" value="Eukaryota"/>
</dbReference>
<dbReference type="HOGENOM" id="CLU_011918_1_0_1"/>
<dbReference type="InParanoid" id="C5DJG1"/>
<dbReference type="OMA" id="KWEFEAR"/>
<dbReference type="OrthoDB" id="289228at2759"/>
<dbReference type="Proteomes" id="UP000002036">
    <property type="component" value="Chromosome F"/>
</dbReference>
<dbReference type="GO" id="GO:0005737">
    <property type="term" value="C:cytoplasm"/>
    <property type="evidence" value="ECO:0007669"/>
    <property type="project" value="UniProtKB-SubCell"/>
</dbReference>
<dbReference type="InterPro" id="IPR006571">
    <property type="entry name" value="TLDc_dom"/>
</dbReference>
<dbReference type="Pfam" id="PF07534">
    <property type="entry name" value="TLD"/>
    <property type="match status" value="1"/>
</dbReference>
<dbReference type="SMART" id="SM00584">
    <property type="entry name" value="TLDc"/>
    <property type="match status" value="1"/>
</dbReference>
<dbReference type="PROSITE" id="PS51886">
    <property type="entry name" value="TLDC"/>
    <property type="match status" value="1"/>
</dbReference>
<name>RTC5_LACTC</name>